<organism>
    <name type="scientific">Saccharomyces cerevisiae (strain ATCC 204508 / S288c)</name>
    <name type="common">Baker's yeast</name>
    <dbReference type="NCBI Taxonomy" id="559292"/>
    <lineage>
        <taxon>Eukaryota</taxon>
        <taxon>Fungi</taxon>
        <taxon>Dikarya</taxon>
        <taxon>Ascomycota</taxon>
        <taxon>Saccharomycotina</taxon>
        <taxon>Saccharomycetes</taxon>
        <taxon>Saccharomycetales</taxon>
        <taxon>Saccharomycetaceae</taxon>
        <taxon>Saccharomyces</taxon>
    </lineage>
</organism>
<evidence type="ECO:0000255" key="1"/>
<evidence type="ECO:0000269" key="2">
    <source>
    </source>
</evidence>
<evidence type="ECO:0000305" key="3"/>
<gene>
    <name type="primary">ANS1</name>
    <name type="ordered locus">YHR126C</name>
</gene>
<keyword id="KW-1003">Cell membrane</keyword>
<keyword id="KW-0325">Glycoprotein</keyword>
<keyword id="KW-0336">GPI-anchor</keyword>
<keyword id="KW-0449">Lipoprotein</keyword>
<keyword id="KW-0472">Membrane</keyword>
<keyword id="KW-1185">Reference proteome</keyword>
<keyword id="KW-0732">Signal</keyword>
<feature type="signal peptide" evidence="1">
    <location>
        <begin position="1"/>
        <end position="20"/>
    </location>
</feature>
<feature type="chain" id="PRO_0000203777" description="Probable GPI-anchored protein ANS1">
    <location>
        <begin position="21"/>
        <end position="137"/>
    </location>
</feature>
<feature type="propeptide" id="PRO_0000402190" description="Removed in mature form" evidence="1">
    <location>
        <begin position="138"/>
        <end position="159"/>
    </location>
</feature>
<feature type="repeat" description="PIR1/2/3">
    <location>
        <begin position="101"/>
        <end position="114"/>
    </location>
</feature>
<feature type="lipid moiety-binding region" description="GPI-anchor amidated glycine" evidence="1">
    <location>
        <position position="137"/>
    </location>
</feature>
<sequence>MKCTLVSTLFAITNILVAHAQVSNSSDTLDVQFANSTNSYIEGKFNSTDEAFNSSASWSLAAQQKKISNAAVYDVGGWNGSLYRSNRSAVADHQPGKKQDAAISQISDGQIQATASGPETTAATTPSSTANVSVYEGAGMKVESKNMGYIVGVAALLFL</sequence>
<protein>
    <recommendedName>
        <fullName>Probable GPI-anchored protein ANS1</fullName>
    </recommendedName>
</protein>
<reference key="1">
    <citation type="journal article" date="1994" name="Science">
        <title>Complete nucleotide sequence of Saccharomyces cerevisiae chromosome VIII.</title>
        <authorList>
            <person name="Johnston M."/>
            <person name="Andrews S."/>
            <person name="Brinkman R."/>
            <person name="Cooper J."/>
            <person name="Ding H."/>
            <person name="Dover J."/>
            <person name="Du Z."/>
            <person name="Favello A."/>
            <person name="Fulton L."/>
            <person name="Gattung S."/>
            <person name="Geisel C."/>
            <person name="Kirsten J."/>
            <person name="Kucaba T."/>
            <person name="Hillier L.W."/>
            <person name="Jier M."/>
            <person name="Johnston L."/>
            <person name="Langston Y."/>
            <person name="Latreille P."/>
            <person name="Louis E.J."/>
            <person name="Macri C."/>
            <person name="Mardis E."/>
            <person name="Menezes S."/>
            <person name="Mouser L."/>
            <person name="Nhan M."/>
            <person name="Rifkin L."/>
            <person name="Riles L."/>
            <person name="St Peter H."/>
            <person name="Trevaskis E."/>
            <person name="Vaughan K."/>
            <person name="Vignati D."/>
            <person name="Wilcox L."/>
            <person name="Wohldman P."/>
            <person name="Waterston R."/>
            <person name="Wilson R."/>
            <person name="Vaudin M."/>
        </authorList>
    </citation>
    <scope>NUCLEOTIDE SEQUENCE [LARGE SCALE GENOMIC DNA]</scope>
    <source>
        <strain>ATCC 204508 / S288c</strain>
    </source>
</reference>
<reference key="2">
    <citation type="journal article" date="2014" name="G3 (Bethesda)">
        <title>The reference genome sequence of Saccharomyces cerevisiae: Then and now.</title>
        <authorList>
            <person name="Engel S.R."/>
            <person name="Dietrich F.S."/>
            <person name="Fisk D.G."/>
            <person name="Binkley G."/>
            <person name="Balakrishnan R."/>
            <person name="Costanzo M.C."/>
            <person name="Dwight S.S."/>
            <person name="Hitz B.C."/>
            <person name="Karra K."/>
            <person name="Nash R.S."/>
            <person name="Weng S."/>
            <person name="Wong E.D."/>
            <person name="Lloyd P."/>
            <person name="Skrzypek M.S."/>
            <person name="Miyasato S.R."/>
            <person name="Simison M."/>
            <person name="Cherry J.M."/>
        </authorList>
    </citation>
    <scope>GENOME REANNOTATION</scope>
    <source>
        <strain>ATCC 204508 / S288c</strain>
    </source>
</reference>
<reference key="3">
    <citation type="journal article" date="2007" name="Genome Res.">
        <title>Approaching a complete repository of sequence-verified protein-encoding clones for Saccharomyces cerevisiae.</title>
        <authorList>
            <person name="Hu Y."/>
            <person name="Rolfs A."/>
            <person name="Bhullar B."/>
            <person name="Murthy T.V.S."/>
            <person name="Zhu C."/>
            <person name="Berger M.F."/>
            <person name="Camargo A.A."/>
            <person name="Kelley F."/>
            <person name="McCarron S."/>
            <person name="Jepson D."/>
            <person name="Richardson A."/>
            <person name="Raphael J."/>
            <person name="Moreira D."/>
            <person name="Taycher E."/>
            <person name="Zuo D."/>
            <person name="Mohr S."/>
            <person name="Kane M.F."/>
            <person name="Williamson J."/>
            <person name="Simpson A.J.G."/>
            <person name="Bulyk M.L."/>
            <person name="Harlow E."/>
            <person name="Marsischky G."/>
            <person name="Kolodner R.D."/>
            <person name="LaBaer J."/>
        </authorList>
    </citation>
    <scope>NUCLEOTIDE SEQUENCE [GENOMIC DNA]</scope>
    <source>
        <strain>ATCC 204508 / S288c</strain>
    </source>
</reference>
<reference key="4">
    <citation type="journal article" date="2006" name="Eukaryot. Cell">
        <title>The function and properties of the Azf1 transcriptional regulator change with growth conditions in Saccharomyces cerevisiae.</title>
        <authorList>
            <person name="Slattery M.G."/>
            <person name="Liko D."/>
            <person name="Heideman W."/>
        </authorList>
    </citation>
    <scope>INDUCTION</scope>
</reference>
<dbReference type="EMBL" id="U10398">
    <property type="protein sequence ID" value="AAB68411.1"/>
    <property type="molecule type" value="Genomic_DNA"/>
</dbReference>
<dbReference type="EMBL" id="AY692674">
    <property type="protein sequence ID" value="AAT92693.1"/>
    <property type="molecule type" value="Genomic_DNA"/>
</dbReference>
<dbReference type="EMBL" id="BK006934">
    <property type="protein sequence ID" value="DAA06819.1"/>
    <property type="molecule type" value="Genomic_DNA"/>
</dbReference>
<dbReference type="PIR" id="S48970">
    <property type="entry name" value="S48970"/>
</dbReference>
<dbReference type="RefSeq" id="NP_011994.1">
    <property type="nucleotide sequence ID" value="NM_001179256.1"/>
</dbReference>
<dbReference type="BioGRID" id="36559">
    <property type="interactions" value="16"/>
</dbReference>
<dbReference type="FunCoup" id="P38832">
    <property type="interactions" value="40"/>
</dbReference>
<dbReference type="STRING" id="4932.YHR126C"/>
<dbReference type="PaxDb" id="4932-YHR126C"/>
<dbReference type="EnsemblFungi" id="YHR126C_mRNA">
    <property type="protein sequence ID" value="YHR126C"/>
    <property type="gene ID" value="YHR126C"/>
</dbReference>
<dbReference type="GeneID" id="856527"/>
<dbReference type="KEGG" id="sce:YHR126C"/>
<dbReference type="AGR" id="SGD:S000001168"/>
<dbReference type="SGD" id="S000001168">
    <property type="gene designation" value="ANS1"/>
</dbReference>
<dbReference type="VEuPathDB" id="FungiDB:YHR126C"/>
<dbReference type="HOGENOM" id="CLU_1678931_0_0_1"/>
<dbReference type="InParanoid" id="P38832"/>
<dbReference type="OrthoDB" id="4054953at2759"/>
<dbReference type="BioCyc" id="YEAST:G3O-31166-MONOMER"/>
<dbReference type="BioGRID-ORCS" id="856527">
    <property type="hits" value="7 hits in 10 CRISPR screens"/>
</dbReference>
<dbReference type="PRO" id="PR:P38832"/>
<dbReference type="Proteomes" id="UP000002311">
    <property type="component" value="Chromosome VIII"/>
</dbReference>
<dbReference type="RNAct" id="P38832">
    <property type="molecule type" value="protein"/>
</dbReference>
<dbReference type="GO" id="GO:0000324">
    <property type="term" value="C:fungal-type vacuole"/>
    <property type="evidence" value="ECO:0007005"/>
    <property type="project" value="SGD"/>
</dbReference>
<dbReference type="GO" id="GO:0005886">
    <property type="term" value="C:plasma membrane"/>
    <property type="evidence" value="ECO:0007669"/>
    <property type="project" value="UniProtKB-SubCell"/>
</dbReference>
<dbReference type="GO" id="GO:0098552">
    <property type="term" value="C:side of membrane"/>
    <property type="evidence" value="ECO:0007669"/>
    <property type="project" value="UniProtKB-KW"/>
</dbReference>
<dbReference type="GO" id="GO:0005199">
    <property type="term" value="F:structural constituent of cell wall"/>
    <property type="evidence" value="ECO:0007669"/>
    <property type="project" value="InterPro"/>
</dbReference>
<dbReference type="InterPro" id="IPR000420">
    <property type="entry name" value="Yeast_PIR_rpt"/>
</dbReference>
<dbReference type="Pfam" id="PF00399">
    <property type="entry name" value="PIR"/>
    <property type="match status" value="1"/>
</dbReference>
<dbReference type="PROSITE" id="PS00929">
    <property type="entry name" value="PIR_REPEAT_1"/>
    <property type="match status" value="1"/>
</dbReference>
<dbReference type="PROSITE" id="PS50256">
    <property type="entry name" value="PIR_REPEAT_2"/>
    <property type="match status" value="1"/>
</dbReference>
<comment type="subcellular location">
    <subcellularLocation>
        <location evidence="3">Cell membrane</location>
        <topology evidence="3">Lipid-anchor</topology>
        <topology evidence="3">GPI-anchor</topology>
    </subcellularLocation>
</comment>
<comment type="induction">
    <text evidence="2">Expression is regulated by AZF1.</text>
</comment>
<name>ANS1_YEAST</name>
<proteinExistence type="evidence at transcript level"/>
<accession>P38832</accession>
<accession>D3DL75</accession>